<organism>
    <name type="scientific">Homo sapiens</name>
    <name type="common">Human</name>
    <dbReference type="NCBI Taxonomy" id="9606"/>
    <lineage>
        <taxon>Eukaryota</taxon>
        <taxon>Metazoa</taxon>
        <taxon>Chordata</taxon>
        <taxon>Craniata</taxon>
        <taxon>Vertebrata</taxon>
        <taxon>Euteleostomi</taxon>
        <taxon>Mammalia</taxon>
        <taxon>Eutheria</taxon>
        <taxon>Euarchontoglires</taxon>
        <taxon>Primates</taxon>
        <taxon>Haplorrhini</taxon>
        <taxon>Catarrhini</taxon>
        <taxon>Hominidae</taxon>
        <taxon>Homo</taxon>
    </lineage>
</organism>
<keyword id="KW-0479">Metal-binding</keyword>
<keyword id="KW-0496">Mitochondrion</keyword>
<keyword id="KW-1185">Reference proteome</keyword>
<keyword id="KW-0862">Zinc</keyword>
<keyword id="KW-0863">Zinc-finger</keyword>
<proteinExistence type="evidence at protein level"/>
<evidence type="ECO:0000250" key="1"/>
<evidence type="ECO:0000269" key="2">
    <source>
    </source>
</evidence>
<evidence type="ECO:0000305" key="3"/>
<sequence length="269" mass="30660">MLFFTQCFGAVLDLIHLRFQHYKAKRVFSAAGQLVCVVNPTHNLKYVSSRRAVTQSAPEQGSFHPHHLSHHHCHHRHHHHLRHHAHPHHLHHQEAGLHANPVTPCLCMCPLFSCQWEGRLEVVVPHLRQIHRVDILQGAEIVFLATDMHLPAPADWIIMHSCLGHHFLLVLRKQERHEGHPQFFATMMLIGTPTQADCFTYRLELNRNHRRLKWEATPRSVLECVDSVITDGDCLVLNTSLAQLFSDNGSLAIGIAITATEVLPSEAEM</sequence>
<comment type="function">
    <text evidence="2">Negative regulator of PRKN translocation to damaged mitochondria. Acts probably by destabilizing PINK1 protein, hence inhibiting PRKN targeting to dysfunctional depolarized mitochondria.</text>
</comment>
<comment type="interaction">
    <interactant intactId="EBI-12880872">
        <id>Q8IW03</id>
    </interactant>
    <interactant intactId="EBI-11962084">
        <id>Q3LI66</id>
        <label>KRTAP6-2</label>
    </interactant>
    <organismsDiffer>false</organismsDiffer>
    <experiments>3</experiments>
</comment>
<comment type="subcellular location">
    <subcellularLocation>
        <location evidence="2">Mitochondrion</location>
    </subcellularLocation>
</comment>
<comment type="similarity">
    <text evidence="3">Belongs to the SINA (Seven in absentia) family.</text>
</comment>
<comment type="sequence caution" evidence="3">
    <conflict type="erroneous initiation">
        <sequence resource="EMBL-CDS" id="AAH41372"/>
    </conflict>
</comment>
<comment type="sequence caution" evidence="3">
    <conflict type="miscellaneous discrepancy">
        <sequence resource="EMBL-CDS" id="BAC04809"/>
    </conflict>
    <text>Chimeric cDNA. A chimeric cDNA originating from chromosomes 13 and 19.</text>
</comment>
<gene>
    <name type="primary">SIAH3</name>
</gene>
<feature type="chain" id="PRO_0000334701" description="Seven in absentia homolog 3">
    <location>
        <begin position="1"/>
        <end position="269"/>
    </location>
</feature>
<feature type="zinc finger region" description="SIAH-type; degenerate">
    <location>
        <begin position="61"/>
        <end position="132"/>
    </location>
</feature>
<feature type="binding site" evidence="1">
    <location>
        <position position="107"/>
    </location>
    <ligand>
        <name>Zn(2+)</name>
        <dbReference type="ChEBI" id="CHEBI:29105"/>
    </ligand>
</feature>
<feature type="binding site" evidence="1">
    <location>
        <position position="114"/>
    </location>
    <ligand>
        <name>Zn(2+)</name>
        <dbReference type="ChEBI" id="CHEBI:29105"/>
    </ligand>
</feature>
<feature type="binding site" evidence="1">
    <location>
        <position position="126"/>
    </location>
    <ligand>
        <name>Zn(2+)</name>
        <dbReference type="ChEBI" id="CHEBI:29105"/>
    </ligand>
</feature>
<feature type="binding site" evidence="1">
    <location>
        <position position="131"/>
    </location>
    <ligand>
        <name>Zn(2+)</name>
        <dbReference type="ChEBI" id="CHEBI:29105"/>
    </ligand>
</feature>
<protein>
    <recommendedName>
        <fullName>Seven in absentia homolog 3</fullName>
        <shortName>Siah-3</shortName>
    </recommendedName>
</protein>
<dbReference type="EMBL" id="AL157819">
    <property type="status" value="NOT_ANNOTATED_CDS"/>
    <property type="molecule type" value="Genomic_DNA"/>
</dbReference>
<dbReference type="EMBL" id="BC041372">
    <property type="protein sequence ID" value="AAH41372.2"/>
    <property type="status" value="ALT_INIT"/>
    <property type="molecule type" value="mRNA"/>
</dbReference>
<dbReference type="EMBL" id="AK096522">
    <property type="protein sequence ID" value="BAC04809.1"/>
    <property type="status" value="ALT_SEQ"/>
    <property type="molecule type" value="mRNA"/>
</dbReference>
<dbReference type="CCDS" id="CCDS41883.1"/>
<dbReference type="RefSeq" id="NP_942146.2">
    <property type="nucleotide sequence ID" value="NM_198849.3"/>
</dbReference>
<dbReference type="SMR" id="Q8IW03"/>
<dbReference type="BioGRID" id="129590">
    <property type="interactions" value="6"/>
</dbReference>
<dbReference type="FunCoup" id="Q8IW03">
    <property type="interactions" value="35"/>
</dbReference>
<dbReference type="IntAct" id="Q8IW03">
    <property type="interactions" value="1"/>
</dbReference>
<dbReference type="STRING" id="9606.ENSP00000383256"/>
<dbReference type="GlyGen" id="Q8IW03">
    <property type="glycosylation" value="1 site"/>
</dbReference>
<dbReference type="BioMuta" id="SIAH3"/>
<dbReference type="DMDM" id="189046787"/>
<dbReference type="jPOST" id="Q8IW03"/>
<dbReference type="PaxDb" id="9606-ENSP00000383256"/>
<dbReference type="Antibodypedia" id="53015">
    <property type="antibodies" value="84 antibodies from 14 providers"/>
</dbReference>
<dbReference type="DNASU" id="283514"/>
<dbReference type="Ensembl" id="ENST00000400405.4">
    <property type="protein sequence ID" value="ENSP00000383256.2"/>
    <property type="gene ID" value="ENSG00000215475.5"/>
</dbReference>
<dbReference type="GeneID" id="283514"/>
<dbReference type="KEGG" id="hsa:283514"/>
<dbReference type="MANE-Select" id="ENST00000400405.4">
    <property type="protein sequence ID" value="ENSP00000383256.2"/>
    <property type="RefSeq nucleotide sequence ID" value="NM_198849.3"/>
    <property type="RefSeq protein sequence ID" value="NP_942146.2"/>
</dbReference>
<dbReference type="UCSC" id="uc001vap.4">
    <property type="organism name" value="human"/>
</dbReference>
<dbReference type="AGR" id="HGNC:30553"/>
<dbReference type="CTD" id="283514"/>
<dbReference type="DisGeNET" id="283514"/>
<dbReference type="GeneCards" id="SIAH3"/>
<dbReference type="HGNC" id="HGNC:30553">
    <property type="gene designation" value="SIAH3"/>
</dbReference>
<dbReference type="HPA" id="ENSG00000215475">
    <property type="expression patterns" value="Tissue enhanced (brain, fallopian tube)"/>
</dbReference>
<dbReference type="MIM" id="615609">
    <property type="type" value="gene"/>
</dbReference>
<dbReference type="neXtProt" id="NX_Q8IW03"/>
<dbReference type="OpenTargets" id="ENSG00000215475"/>
<dbReference type="PharmGKB" id="PA164725697"/>
<dbReference type="VEuPathDB" id="HostDB:ENSG00000215475"/>
<dbReference type="eggNOG" id="KOG3002">
    <property type="taxonomic scope" value="Eukaryota"/>
</dbReference>
<dbReference type="GeneTree" id="ENSGT00940000161772"/>
<dbReference type="HOGENOM" id="CLU_093890_0_0_1"/>
<dbReference type="InParanoid" id="Q8IW03"/>
<dbReference type="OMA" id="CICPLFS"/>
<dbReference type="OrthoDB" id="941555at2759"/>
<dbReference type="PAN-GO" id="Q8IW03">
    <property type="GO annotations" value="4 GO annotations based on evolutionary models"/>
</dbReference>
<dbReference type="PhylomeDB" id="Q8IW03"/>
<dbReference type="TreeFam" id="TF312976"/>
<dbReference type="PathwayCommons" id="Q8IW03"/>
<dbReference type="SignaLink" id="Q8IW03"/>
<dbReference type="SIGNOR" id="Q8IW03"/>
<dbReference type="BioGRID-ORCS" id="283514">
    <property type="hits" value="10 hits in 1187 CRISPR screens"/>
</dbReference>
<dbReference type="GenomeRNAi" id="283514"/>
<dbReference type="Pharos" id="Q8IW03">
    <property type="development level" value="Tdark"/>
</dbReference>
<dbReference type="PRO" id="PR:Q8IW03"/>
<dbReference type="Proteomes" id="UP000005640">
    <property type="component" value="Chromosome 13"/>
</dbReference>
<dbReference type="RNAct" id="Q8IW03">
    <property type="molecule type" value="protein"/>
</dbReference>
<dbReference type="Bgee" id="ENSG00000215475">
    <property type="expression patterns" value="Expressed in cortical plate and 57 other cell types or tissues"/>
</dbReference>
<dbReference type="GO" id="GO:0005737">
    <property type="term" value="C:cytoplasm"/>
    <property type="evidence" value="ECO:0000318"/>
    <property type="project" value="GO_Central"/>
</dbReference>
<dbReference type="GO" id="GO:0005739">
    <property type="term" value="C:mitochondrion"/>
    <property type="evidence" value="ECO:0000314"/>
    <property type="project" value="ParkinsonsUK-UCL"/>
</dbReference>
<dbReference type="GO" id="GO:0005654">
    <property type="term" value="C:nucleoplasm"/>
    <property type="evidence" value="ECO:0000314"/>
    <property type="project" value="HPA"/>
</dbReference>
<dbReference type="GO" id="GO:0031624">
    <property type="term" value="F:ubiquitin conjugating enzyme binding"/>
    <property type="evidence" value="ECO:0000318"/>
    <property type="project" value="GO_Central"/>
</dbReference>
<dbReference type="GO" id="GO:0061630">
    <property type="term" value="F:ubiquitin protein ligase activity"/>
    <property type="evidence" value="ECO:0000318"/>
    <property type="project" value="GO_Central"/>
</dbReference>
<dbReference type="GO" id="GO:0008270">
    <property type="term" value="F:zinc ion binding"/>
    <property type="evidence" value="ECO:0007669"/>
    <property type="project" value="UniProtKB-KW"/>
</dbReference>
<dbReference type="GO" id="GO:1903215">
    <property type="term" value="P:negative regulation of protein targeting to mitochondrion"/>
    <property type="evidence" value="ECO:0000314"/>
    <property type="project" value="ParkinsonsUK-UCL"/>
</dbReference>
<dbReference type="GO" id="GO:0043161">
    <property type="term" value="P:proteasome-mediated ubiquitin-dependent protein catabolic process"/>
    <property type="evidence" value="ECO:0000318"/>
    <property type="project" value="GO_Central"/>
</dbReference>
<dbReference type="GO" id="GO:0031647">
    <property type="term" value="P:regulation of protein stability"/>
    <property type="evidence" value="ECO:0000315"/>
    <property type="project" value="ParkinsonsUK-UCL"/>
</dbReference>
<dbReference type="CDD" id="cd03829">
    <property type="entry name" value="Sina"/>
    <property type="match status" value="1"/>
</dbReference>
<dbReference type="FunFam" id="2.60.210.10:FF:000002">
    <property type="entry name" value="E3 ubiquitin-protein ligase"/>
    <property type="match status" value="1"/>
</dbReference>
<dbReference type="FunFam" id="3.30.160.60:FF:000665">
    <property type="entry name" value="E3 ubiquitin-protein ligase"/>
    <property type="match status" value="1"/>
</dbReference>
<dbReference type="Gene3D" id="2.60.210.10">
    <property type="entry name" value="Apoptosis, Tumor Necrosis Factor Receptor Associated Protein 2, Chain A"/>
    <property type="match status" value="1"/>
</dbReference>
<dbReference type="Gene3D" id="3.30.160.60">
    <property type="entry name" value="Classic Zinc Finger"/>
    <property type="match status" value="1"/>
</dbReference>
<dbReference type="InterPro" id="IPR018121">
    <property type="entry name" value="7-in-absentia-prot_TRAF-dom"/>
</dbReference>
<dbReference type="InterPro" id="IPR004162">
    <property type="entry name" value="SINA-like_animal"/>
</dbReference>
<dbReference type="InterPro" id="IPR008974">
    <property type="entry name" value="TRAF-like"/>
</dbReference>
<dbReference type="PANTHER" id="PTHR45877">
    <property type="entry name" value="E3 UBIQUITIN-PROTEIN LIGASE SIAH2"/>
    <property type="match status" value="1"/>
</dbReference>
<dbReference type="PANTHER" id="PTHR45877:SF5">
    <property type="entry name" value="SEVEN IN ABSENTIA HOMOLOG 3"/>
    <property type="match status" value="1"/>
</dbReference>
<dbReference type="Pfam" id="PF03145">
    <property type="entry name" value="Sina_TRAF"/>
    <property type="match status" value="1"/>
</dbReference>
<dbReference type="SUPFAM" id="SSF49599">
    <property type="entry name" value="TRAF domain-like"/>
    <property type="match status" value="1"/>
</dbReference>
<reference key="1">
    <citation type="journal article" date="2004" name="Nature">
        <title>The DNA sequence and analysis of human chromosome 13.</title>
        <authorList>
            <person name="Dunham A."/>
            <person name="Matthews L.H."/>
            <person name="Burton J."/>
            <person name="Ashurst J.L."/>
            <person name="Howe K.L."/>
            <person name="Ashcroft K.J."/>
            <person name="Beare D.M."/>
            <person name="Burford D.C."/>
            <person name="Hunt S.E."/>
            <person name="Griffiths-Jones S."/>
            <person name="Jones M.C."/>
            <person name="Keenan S.J."/>
            <person name="Oliver K."/>
            <person name="Scott C.E."/>
            <person name="Ainscough R."/>
            <person name="Almeida J.P."/>
            <person name="Ambrose K.D."/>
            <person name="Andrews D.T."/>
            <person name="Ashwell R.I.S."/>
            <person name="Babbage A.K."/>
            <person name="Bagguley C.L."/>
            <person name="Bailey J."/>
            <person name="Bannerjee R."/>
            <person name="Barlow K.F."/>
            <person name="Bates K."/>
            <person name="Beasley H."/>
            <person name="Bird C.P."/>
            <person name="Bray-Allen S."/>
            <person name="Brown A.J."/>
            <person name="Brown J.Y."/>
            <person name="Burrill W."/>
            <person name="Carder C."/>
            <person name="Carter N.P."/>
            <person name="Chapman J.C."/>
            <person name="Clamp M.E."/>
            <person name="Clark S.Y."/>
            <person name="Clarke G."/>
            <person name="Clee C.M."/>
            <person name="Clegg S.C."/>
            <person name="Cobley V."/>
            <person name="Collins J.E."/>
            <person name="Corby N."/>
            <person name="Coville G.J."/>
            <person name="Deloukas P."/>
            <person name="Dhami P."/>
            <person name="Dunham I."/>
            <person name="Dunn M."/>
            <person name="Earthrowl M.E."/>
            <person name="Ellington A.G."/>
            <person name="Faulkner L."/>
            <person name="Frankish A.G."/>
            <person name="Frankland J."/>
            <person name="French L."/>
            <person name="Garner P."/>
            <person name="Garnett J."/>
            <person name="Gilbert J.G.R."/>
            <person name="Gilson C.J."/>
            <person name="Ghori J."/>
            <person name="Grafham D.V."/>
            <person name="Gribble S.M."/>
            <person name="Griffiths C."/>
            <person name="Hall R.E."/>
            <person name="Hammond S."/>
            <person name="Harley J.L."/>
            <person name="Hart E.A."/>
            <person name="Heath P.D."/>
            <person name="Howden P.J."/>
            <person name="Huckle E.J."/>
            <person name="Hunt P.J."/>
            <person name="Hunt A.R."/>
            <person name="Johnson C."/>
            <person name="Johnson D."/>
            <person name="Kay M."/>
            <person name="Kimberley A.M."/>
            <person name="King A."/>
            <person name="Laird G.K."/>
            <person name="Langford C.J."/>
            <person name="Lawlor S."/>
            <person name="Leongamornlert D.A."/>
            <person name="Lloyd D.M."/>
            <person name="Lloyd C."/>
            <person name="Loveland J.E."/>
            <person name="Lovell J."/>
            <person name="Martin S."/>
            <person name="Mashreghi-Mohammadi M."/>
            <person name="McLaren S.J."/>
            <person name="McMurray A."/>
            <person name="Milne S."/>
            <person name="Moore M.J.F."/>
            <person name="Nickerson T."/>
            <person name="Palmer S.A."/>
            <person name="Pearce A.V."/>
            <person name="Peck A.I."/>
            <person name="Pelan S."/>
            <person name="Phillimore B."/>
            <person name="Porter K.M."/>
            <person name="Rice C.M."/>
            <person name="Searle S."/>
            <person name="Sehra H.K."/>
            <person name="Shownkeen R."/>
            <person name="Skuce C.D."/>
            <person name="Smith M."/>
            <person name="Steward C.A."/>
            <person name="Sycamore N."/>
            <person name="Tester J."/>
            <person name="Thomas D.W."/>
            <person name="Tracey A."/>
            <person name="Tromans A."/>
            <person name="Tubby B."/>
            <person name="Wall M."/>
            <person name="Wallis J.M."/>
            <person name="West A.P."/>
            <person name="Whitehead S.L."/>
            <person name="Willey D.L."/>
            <person name="Wilming L."/>
            <person name="Wray P.W."/>
            <person name="Wright M.W."/>
            <person name="Young L."/>
            <person name="Coulson A."/>
            <person name="Durbin R.M."/>
            <person name="Hubbard T."/>
            <person name="Sulston J.E."/>
            <person name="Beck S."/>
            <person name="Bentley D.R."/>
            <person name="Rogers J."/>
            <person name="Ross M.T."/>
        </authorList>
    </citation>
    <scope>NUCLEOTIDE SEQUENCE [LARGE SCALE GENOMIC DNA]</scope>
</reference>
<reference key="2">
    <citation type="journal article" date="2004" name="Genome Res.">
        <title>The status, quality, and expansion of the NIH full-length cDNA project: the Mammalian Gene Collection (MGC).</title>
        <authorList>
            <consortium name="The MGC Project Team"/>
        </authorList>
    </citation>
    <scope>NUCLEOTIDE SEQUENCE [LARGE SCALE MRNA]</scope>
    <source>
        <tissue>Hippocampus</tissue>
    </source>
</reference>
<reference key="3">
    <citation type="journal article" date="2004" name="Nat. Genet.">
        <title>Complete sequencing and characterization of 21,243 full-length human cDNAs.</title>
        <authorList>
            <person name="Ota T."/>
            <person name="Suzuki Y."/>
            <person name="Nishikawa T."/>
            <person name="Otsuki T."/>
            <person name="Sugiyama T."/>
            <person name="Irie R."/>
            <person name="Wakamatsu A."/>
            <person name="Hayashi K."/>
            <person name="Sato H."/>
            <person name="Nagai K."/>
            <person name="Kimura K."/>
            <person name="Makita H."/>
            <person name="Sekine M."/>
            <person name="Obayashi M."/>
            <person name="Nishi T."/>
            <person name="Shibahara T."/>
            <person name="Tanaka T."/>
            <person name="Ishii S."/>
            <person name="Yamamoto J."/>
            <person name="Saito K."/>
            <person name="Kawai Y."/>
            <person name="Isono Y."/>
            <person name="Nakamura Y."/>
            <person name="Nagahari K."/>
            <person name="Murakami K."/>
            <person name="Yasuda T."/>
            <person name="Iwayanagi T."/>
            <person name="Wagatsuma M."/>
            <person name="Shiratori A."/>
            <person name="Sudo H."/>
            <person name="Hosoiri T."/>
            <person name="Kaku Y."/>
            <person name="Kodaira H."/>
            <person name="Kondo H."/>
            <person name="Sugawara M."/>
            <person name="Takahashi M."/>
            <person name="Kanda K."/>
            <person name="Yokoi T."/>
            <person name="Furuya T."/>
            <person name="Kikkawa E."/>
            <person name="Omura Y."/>
            <person name="Abe K."/>
            <person name="Kamihara K."/>
            <person name="Katsuta N."/>
            <person name="Sato K."/>
            <person name="Tanikawa M."/>
            <person name="Yamazaki M."/>
            <person name="Ninomiya K."/>
            <person name="Ishibashi T."/>
            <person name="Yamashita H."/>
            <person name="Murakawa K."/>
            <person name="Fujimori K."/>
            <person name="Tanai H."/>
            <person name="Kimata M."/>
            <person name="Watanabe M."/>
            <person name="Hiraoka S."/>
            <person name="Chiba Y."/>
            <person name="Ishida S."/>
            <person name="Ono Y."/>
            <person name="Takiguchi S."/>
            <person name="Watanabe S."/>
            <person name="Yosida M."/>
            <person name="Hotuta T."/>
            <person name="Kusano J."/>
            <person name="Kanehori K."/>
            <person name="Takahashi-Fujii A."/>
            <person name="Hara H."/>
            <person name="Tanase T.-O."/>
            <person name="Nomura Y."/>
            <person name="Togiya S."/>
            <person name="Komai F."/>
            <person name="Hara R."/>
            <person name="Takeuchi K."/>
            <person name="Arita M."/>
            <person name="Imose N."/>
            <person name="Musashino K."/>
            <person name="Yuuki H."/>
            <person name="Oshima A."/>
            <person name="Sasaki N."/>
            <person name="Aotsuka S."/>
            <person name="Yoshikawa Y."/>
            <person name="Matsunawa H."/>
            <person name="Ichihara T."/>
            <person name="Shiohata N."/>
            <person name="Sano S."/>
            <person name="Moriya S."/>
            <person name="Momiyama H."/>
            <person name="Satoh N."/>
            <person name="Takami S."/>
            <person name="Terashima Y."/>
            <person name="Suzuki O."/>
            <person name="Nakagawa S."/>
            <person name="Senoh A."/>
            <person name="Mizoguchi H."/>
            <person name="Goto Y."/>
            <person name="Shimizu F."/>
            <person name="Wakebe H."/>
            <person name="Hishigaki H."/>
            <person name="Watanabe T."/>
            <person name="Sugiyama A."/>
            <person name="Takemoto M."/>
            <person name="Kawakami B."/>
            <person name="Yamazaki M."/>
            <person name="Watanabe K."/>
            <person name="Kumagai A."/>
            <person name="Itakura S."/>
            <person name="Fukuzumi Y."/>
            <person name="Fujimori Y."/>
            <person name="Komiyama M."/>
            <person name="Tashiro H."/>
            <person name="Tanigami A."/>
            <person name="Fujiwara T."/>
            <person name="Ono T."/>
            <person name="Yamada K."/>
            <person name="Fujii Y."/>
            <person name="Ozaki K."/>
            <person name="Hirao M."/>
            <person name="Ohmori Y."/>
            <person name="Kawabata A."/>
            <person name="Hikiji T."/>
            <person name="Kobatake N."/>
            <person name="Inagaki H."/>
            <person name="Ikema Y."/>
            <person name="Okamoto S."/>
            <person name="Okitani R."/>
            <person name="Kawakami T."/>
            <person name="Noguchi S."/>
            <person name="Itoh T."/>
            <person name="Shigeta K."/>
            <person name="Senba T."/>
            <person name="Matsumura K."/>
            <person name="Nakajima Y."/>
            <person name="Mizuno T."/>
            <person name="Morinaga M."/>
            <person name="Sasaki M."/>
            <person name="Togashi T."/>
            <person name="Oyama M."/>
            <person name="Hata H."/>
            <person name="Watanabe M."/>
            <person name="Komatsu T."/>
            <person name="Mizushima-Sugano J."/>
            <person name="Satoh T."/>
            <person name="Shirai Y."/>
            <person name="Takahashi Y."/>
            <person name="Nakagawa K."/>
            <person name="Okumura K."/>
            <person name="Nagase T."/>
            <person name="Nomura N."/>
            <person name="Kikuchi H."/>
            <person name="Masuho Y."/>
            <person name="Yamashita R."/>
            <person name="Nakai K."/>
            <person name="Yada T."/>
            <person name="Nakamura Y."/>
            <person name="Ohara O."/>
            <person name="Isogai T."/>
            <person name="Sugano S."/>
        </authorList>
    </citation>
    <scope>NUCLEOTIDE SEQUENCE [LARGE SCALE MRNA] OF 4-204</scope>
    <source>
        <tissue>Brain</tissue>
    </source>
</reference>
<reference key="4">
    <citation type="journal article" date="2013" name="Nature">
        <title>High-content genome-wide RNAi screens identify regulators of parkin upstream of mitophagy.</title>
        <authorList>
            <person name="Hasson S.A."/>
            <person name="Kane L.A."/>
            <person name="Yamano K."/>
            <person name="Huang C.H."/>
            <person name="Sliter D.A."/>
            <person name="Buehler E."/>
            <person name="Wang C."/>
            <person name="Heman-Ackah S.M."/>
            <person name="Hessa T."/>
            <person name="Guha R."/>
            <person name="Martin S.E."/>
            <person name="Youle R.J."/>
        </authorList>
    </citation>
    <scope>FUNCTION</scope>
    <scope>SUBCELLULAR LOCATION</scope>
</reference>
<accession>Q8IW03</accession>
<accession>B7ZBP0</accession>
<accession>Q8N8M6</accession>
<name>SIAH3_HUMAN</name>